<protein>
    <recommendedName>
        <fullName evidence="1">Endonuclease V</fullName>
        <ecNumber evidence="1">3.1.21.7</ecNumber>
    </recommendedName>
    <alternativeName>
        <fullName evidence="1">Deoxyinosine 3'endonuclease</fullName>
    </alternativeName>
    <alternativeName>
        <fullName evidence="1">Deoxyribonuclease V</fullName>
        <shortName evidence="1">DNase V</shortName>
    </alternativeName>
</protein>
<feature type="chain" id="PRO_0000159683" description="Endonuclease V">
    <location>
        <begin position="1"/>
        <end position="255"/>
    </location>
</feature>
<feature type="binding site" evidence="1">
    <location>
        <position position="42"/>
    </location>
    <ligand>
        <name>Mg(2+)</name>
        <dbReference type="ChEBI" id="CHEBI:18420"/>
    </ligand>
</feature>
<feature type="binding site" evidence="1">
    <location>
        <position position="110"/>
    </location>
    <ligand>
        <name>Mg(2+)</name>
        <dbReference type="ChEBI" id="CHEBI:18420"/>
    </ligand>
</feature>
<feature type="site" description="Interaction with target DNA" evidence="1">
    <location>
        <position position="80"/>
    </location>
</feature>
<organism>
    <name type="scientific">Aeropyrum pernix (strain ATCC 700893 / DSM 11879 / JCM 9820 / NBRC 100138 / K1)</name>
    <dbReference type="NCBI Taxonomy" id="272557"/>
    <lineage>
        <taxon>Archaea</taxon>
        <taxon>Thermoproteota</taxon>
        <taxon>Thermoprotei</taxon>
        <taxon>Desulfurococcales</taxon>
        <taxon>Desulfurococcaceae</taxon>
        <taxon>Aeropyrum</taxon>
    </lineage>
</organism>
<evidence type="ECO:0000255" key="1">
    <source>
        <dbReference type="HAMAP-Rule" id="MF_00801"/>
    </source>
</evidence>
<evidence type="ECO:0000305" key="2"/>
<reference key="1">
    <citation type="journal article" date="1999" name="DNA Res.">
        <title>Complete genome sequence of an aerobic hyper-thermophilic crenarchaeon, Aeropyrum pernix K1.</title>
        <authorList>
            <person name="Kawarabayasi Y."/>
            <person name="Hino Y."/>
            <person name="Horikawa H."/>
            <person name="Yamazaki S."/>
            <person name="Haikawa Y."/>
            <person name="Jin-no K."/>
            <person name="Takahashi M."/>
            <person name="Sekine M."/>
            <person name="Baba S."/>
            <person name="Ankai A."/>
            <person name="Kosugi H."/>
            <person name="Hosoyama A."/>
            <person name="Fukui S."/>
            <person name="Nagai Y."/>
            <person name="Nishijima K."/>
            <person name="Nakazawa H."/>
            <person name="Takamiya M."/>
            <person name="Masuda S."/>
            <person name="Funahashi T."/>
            <person name="Tanaka T."/>
            <person name="Kudoh Y."/>
            <person name="Yamazaki J."/>
            <person name="Kushida N."/>
            <person name="Oguchi A."/>
            <person name="Aoki K."/>
            <person name="Kubota K."/>
            <person name="Nakamura Y."/>
            <person name="Nomura N."/>
            <person name="Sako Y."/>
            <person name="Kikuchi H."/>
        </authorList>
    </citation>
    <scope>NUCLEOTIDE SEQUENCE [LARGE SCALE GENOMIC DNA]</scope>
    <source>
        <strain>ATCC 700893 / DSM 11879 / JCM 9820 / NBRC 100138 / K1</strain>
    </source>
</reference>
<accession>Q9YES5</accession>
<name>NFI_AERPE</name>
<comment type="function">
    <text evidence="1">DNA repair enzyme involved in the repair of deaminated bases. Selectively cleaves double-stranded DNA at the second phosphodiester bond 3' to a deoxyinosine leaving behind the intact lesion on the nicked DNA.</text>
</comment>
<comment type="catalytic activity">
    <reaction evidence="1">
        <text>Endonucleolytic cleavage at apurinic or apyrimidinic sites to products with a 5'-phosphate.</text>
        <dbReference type="EC" id="3.1.21.7"/>
    </reaction>
</comment>
<comment type="cofactor">
    <cofactor evidence="1">
        <name>Mg(2+)</name>
        <dbReference type="ChEBI" id="CHEBI:18420"/>
    </cofactor>
</comment>
<comment type="subcellular location">
    <subcellularLocation>
        <location evidence="1">Cytoplasm</location>
    </subcellularLocation>
</comment>
<comment type="similarity">
    <text evidence="1">Belongs to the endonuclease V family.</text>
</comment>
<comment type="sequence caution" evidence="2">
    <conflict type="erroneous initiation">
        <sequence resource="EMBL-CDS" id="BAA79471"/>
    </conflict>
</comment>
<gene>
    <name evidence="1" type="primary">nfi</name>
    <name type="ordered locus">APE_0506</name>
</gene>
<dbReference type="EC" id="3.1.21.7" evidence="1"/>
<dbReference type="EMBL" id="BA000002">
    <property type="protein sequence ID" value="BAA79471.1"/>
    <property type="status" value="ALT_INIT"/>
    <property type="molecule type" value="Genomic_DNA"/>
</dbReference>
<dbReference type="PIR" id="C72747">
    <property type="entry name" value="C72747"/>
</dbReference>
<dbReference type="RefSeq" id="WP_148678903.1">
    <property type="nucleotide sequence ID" value="NC_000854.2"/>
</dbReference>
<dbReference type="SMR" id="Q9YES5"/>
<dbReference type="STRING" id="272557.APE_0506"/>
<dbReference type="EnsemblBacteria" id="BAA79471">
    <property type="protein sequence ID" value="BAA79471"/>
    <property type="gene ID" value="APE_0506"/>
</dbReference>
<dbReference type="GeneID" id="1444685"/>
<dbReference type="KEGG" id="ape:APE_0506"/>
<dbReference type="PATRIC" id="fig|272557.25.peg.382"/>
<dbReference type="eggNOG" id="arCOG00929">
    <property type="taxonomic scope" value="Archaea"/>
</dbReference>
<dbReference type="Proteomes" id="UP000002518">
    <property type="component" value="Chromosome"/>
</dbReference>
<dbReference type="GO" id="GO:0005737">
    <property type="term" value="C:cytoplasm"/>
    <property type="evidence" value="ECO:0007669"/>
    <property type="project" value="UniProtKB-SubCell"/>
</dbReference>
<dbReference type="GO" id="GO:0043737">
    <property type="term" value="F:deoxyribonuclease V activity"/>
    <property type="evidence" value="ECO:0007669"/>
    <property type="project" value="UniProtKB-UniRule"/>
</dbReference>
<dbReference type="GO" id="GO:0000287">
    <property type="term" value="F:magnesium ion binding"/>
    <property type="evidence" value="ECO:0007669"/>
    <property type="project" value="UniProtKB-UniRule"/>
</dbReference>
<dbReference type="GO" id="GO:0016891">
    <property type="term" value="F:RNA endonuclease activity, producing 5'-phosphomonoesters"/>
    <property type="evidence" value="ECO:0007669"/>
    <property type="project" value="TreeGrafter"/>
</dbReference>
<dbReference type="GO" id="GO:0003727">
    <property type="term" value="F:single-stranded RNA binding"/>
    <property type="evidence" value="ECO:0007669"/>
    <property type="project" value="TreeGrafter"/>
</dbReference>
<dbReference type="GO" id="GO:0006281">
    <property type="term" value="P:DNA repair"/>
    <property type="evidence" value="ECO:0007669"/>
    <property type="project" value="UniProtKB-UniRule"/>
</dbReference>
<dbReference type="CDD" id="cd06559">
    <property type="entry name" value="Endonuclease_V"/>
    <property type="match status" value="1"/>
</dbReference>
<dbReference type="Gene3D" id="3.30.2170.10">
    <property type="entry name" value="archaeoglobus fulgidus dsm 4304 superfamily"/>
    <property type="match status" value="1"/>
</dbReference>
<dbReference type="HAMAP" id="MF_00801">
    <property type="entry name" value="Endonuclease_5"/>
    <property type="match status" value="1"/>
</dbReference>
<dbReference type="InterPro" id="IPR007581">
    <property type="entry name" value="Endonuclease-V"/>
</dbReference>
<dbReference type="PANTHER" id="PTHR28511">
    <property type="entry name" value="ENDONUCLEASE V"/>
    <property type="match status" value="1"/>
</dbReference>
<dbReference type="PANTHER" id="PTHR28511:SF1">
    <property type="entry name" value="ENDONUCLEASE V"/>
    <property type="match status" value="1"/>
</dbReference>
<dbReference type="Pfam" id="PF04493">
    <property type="entry name" value="Endonuclease_5"/>
    <property type="match status" value="1"/>
</dbReference>
<keyword id="KW-0963">Cytoplasm</keyword>
<keyword id="KW-0227">DNA damage</keyword>
<keyword id="KW-0234">DNA repair</keyword>
<keyword id="KW-0255">Endonuclease</keyword>
<keyword id="KW-0378">Hydrolase</keyword>
<keyword id="KW-0460">Magnesium</keyword>
<keyword id="KW-0479">Metal-binding</keyword>
<keyword id="KW-0540">Nuclease</keyword>
<keyword id="KW-1185">Reference proteome</keyword>
<sequence length="255" mass="27258">MNRREVRCAFSASKAARAQLLLRGKVRLEPLPTRPRTVLGLDASYSAKDGVGVGAAVLISLETLEPVDCRVYISRVCIPYIPGLLAFRELAVMAPAAAALSAEADVVMVDGHGIAHPRRFGIASHVGVILERPSIGVAKKKLVGTLVEGPGGMYVVQDGERLAIVLGTRPREVYVSPGHRITLEEAASIARATIRPGGWMPEPTRLADVISKALKTIIGGQSLINSALASLCRVKLGPRLEELERPLRRAGLEVE</sequence>
<proteinExistence type="inferred from homology"/>